<protein>
    <recommendedName>
        <fullName evidence="1">Cobalt-precorrin-5B C(1)-methyltransferase</fullName>
        <ecNumber evidence="1">2.1.1.195</ecNumber>
    </recommendedName>
    <alternativeName>
        <fullName evidence="1">Cobalt-precorrin-6A synthase</fullName>
    </alternativeName>
</protein>
<reference key="1">
    <citation type="journal article" date="2005" name="Nat. Biotechnol.">
        <title>Complete genome sequence of the plant commensal Pseudomonas fluorescens Pf-5.</title>
        <authorList>
            <person name="Paulsen I.T."/>
            <person name="Press C.M."/>
            <person name="Ravel J."/>
            <person name="Kobayashi D.Y."/>
            <person name="Myers G.S.A."/>
            <person name="Mavrodi D.V."/>
            <person name="DeBoy R.T."/>
            <person name="Seshadri R."/>
            <person name="Ren Q."/>
            <person name="Madupu R."/>
            <person name="Dodson R.J."/>
            <person name="Durkin A.S."/>
            <person name="Brinkac L.M."/>
            <person name="Daugherty S.C."/>
            <person name="Sullivan S.A."/>
            <person name="Rosovitz M.J."/>
            <person name="Gwinn M.L."/>
            <person name="Zhou L."/>
            <person name="Schneider D.J."/>
            <person name="Cartinhour S.W."/>
            <person name="Nelson W.C."/>
            <person name="Weidman J."/>
            <person name="Watkins K."/>
            <person name="Tran K."/>
            <person name="Khouri H."/>
            <person name="Pierson E.A."/>
            <person name="Pierson L.S. III"/>
            <person name="Thomashow L.S."/>
            <person name="Loper J.E."/>
        </authorList>
    </citation>
    <scope>NUCLEOTIDE SEQUENCE [LARGE SCALE GENOMIC DNA]</scope>
    <source>
        <strain>ATCC BAA-477 / NRRL B-23932 / Pf-5</strain>
    </source>
</reference>
<comment type="function">
    <text evidence="1">Catalyzes the methylation of C-1 in cobalt-precorrin-5B to form cobalt-precorrin-6A.</text>
</comment>
<comment type="catalytic activity">
    <reaction evidence="1">
        <text>Co-precorrin-5B + S-adenosyl-L-methionine = Co-precorrin-6A + S-adenosyl-L-homocysteine</text>
        <dbReference type="Rhea" id="RHEA:26285"/>
        <dbReference type="ChEBI" id="CHEBI:57856"/>
        <dbReference type="ChEBI" id="CHEBI:59789"/>
        <dbReference type="ChEBI" id="CHEBI:60063"/>
        <dbReference type="ChEBI" id="CHEBI:60064"/>
        <dbReference type="EC" id="2.1.1.195"/>
    </reaction>
</comment>
<comment type="pathway">
    <text evidence="1">Cofactor biosynthesis; adenosylcobalamin biosynthesis; cob(II)yrinate a,c-diamide from sirohydrochlorin (anaerobic route): step 6/10.</text>
</comment>
<comment type="similarity">
    <text evidence="1">Belongs to the CbiD family.</text>
</comment>
<dbReference type="EC" id="2.1.1.195" evidence="1"/>
<dbReference type="EMBL" id="CP000076">
    <property type="protein sequence ID" value="AAY96062.2"/>
    <property type="molecule type" value="Genomic_DNA"/>
</dbReference>
<dbReference type="RefSeq" id="WP_011059023.1">
    <property type="nucleotide sequence ID" value="NC_004129.6"/>
</dbReference>
<dbReference type="SMR" id="Q4KIY6"/>
<dbReference type="STRING" id="220664.PFL_0655"/>
<dbReference type="KEGG" id="pfl:PFL_0655"/>
<dbReference type="PATRIC" id="fig|220664.5.peg.672"/>
<dbReference type="eggNOG" id="COG1903">
    <property type="taxonomic scope" value="Bacteria"/>
</dbReference>
<dbReference type="HOGENOM" id="CLU_041273_0_0_6"/>
<dbReference type="UniPathway" id="UPA00148">
    <property type="reaction ID" value="UER00227"/>
</dbReference>
<dbReference type="Proteomes" id="UP000008540">
    <property type="component" value="Chromosome"/>
</dbReference>
<dbReference type="GO" id="GO:0043780">
    <property type="term" value="F:cobalt-precorrin-5B C1-methyltransferase activity"/>
    <property type="evidence" value="ECO:0007669"/>
    <property type="project" value="RHEA"/>
</dbReference>
<dbReference type="GO" id="GO:0019251">
    <property type="term" value="P:anaerobic cobalamin biosynthetic process"/>
    <property type="evidence" value="ECO:0007669"/>
    <property type="project" value="UniProtKB-UniRule"/>
</dbReference>
<dbReference type="GO" id="GO:0032259">
    <property type="term" value="P:methylation"/>
    <property type="evidence" value="ECO:0007669"/>
    <property type="project" value="UniProtKB-KW"/>
</dbReference>
<dbReference type="Gene3D" id="3.30.2110.10">
    <property type="entry name" value="CbiD-like"/>
    <property type="match status" value="1"/>
</dbReference>
<dbReference type="HAMAP" id="MF_00787">
    <property type="entry name" value="CbiD"/>
    <property type="match status" value="1"/>
</dbReference>
<dbReference type="InterPro" id="IPR002748">
    <property type="entry name" value="CbiD"/>
</dbReference>
<dbReference type="InterPro" id="IPR036074">
    <property type="entry name" value="CbiD_sf"/>
</dbReference>
<dbReference type="NCBIfam" id="TIGR00312">
    <property type="entry name" value="cbiD"/>
    <property type="match status" value="1"/>
</dbReference>
<dbReference type="NCBIfam" id="NF000849">
    <property type="entry name" value="PRK00075.1-1"/>
    <property type="match status" value="1"/>
</dbReference>
<dbReference type="PANTHER" id="PTHR35863">
    <property type="entry name" value="COBALT-PRECORRIN-5B C(1)-METHYLTRANSFERASE"/>
    <property type="match status" value="1"/>
</dbReference>
<dbReference type="PANTHER" id="PTHR35863:SF1">
    <property type="entry name" value="COBALT-PRECORRIN-5B C(1)-METHYLTRANSFERASE"/>
    <property type="match status" value="1"/>
</dbReference>
<dbReference type="Pfam" id="PF01888">
    <property type="entry name" value="CbiD"/>
    <property type="match status" value="1"/>
</dbReference>
<dbReference type="PIRSF" id="PIRSF026782">
    <property type="entry name" value="CbiD"/>
    <property type="match status" value="1"/>
</dbReference>
<dbReference type="SUPFAM" id="SSF111342">
    <property type="entry name" value="CbiD-like"/>
    <property type="match status" value="1"/>
</dbReference>
<proteinExistence type="inferred from homology"/>
<organism>
    <name type="scientific">Pseudomonas fluorescens (strain ATCC BAA-477 / NRRL B-23932 / Pf-5)</name>
    <dbReference type="NCBI Taxonomy" id="220664"/>
    <lineage>
        <taxon>Bacteria</taxon>
        <taxon>Pseudomonadati</taxon>
        <taxon>Pseudomonadota</taxon>
        <taxon>Gammaproteobacteria</taxon>
        <taxon>Pseudomonadales</taxon>
        <taxon>Pseudomonadaceae</taxon>
        <taxon>Pseudomonas</taxon>
    </lineage>
</organism>
<evidence type="ECO:0000255" key="1">
    <source>
        <dbReference type="HAMAP-Rule" id="MF_00787"/>
    </source>
</evidence>
<name>CBID_PSEF5</name>
<accession>Q4KIY6</accession>
<keyword id="KW-0169">Cobalamin biosynthesis</keyword>
<keyword id="KW-0489">Methyltransferase</keyword>
<keyword id="KW-0949">S-adenosyl-L-methionine</keyword>
<keyword id="KW-0808">Transferase</keyword>
<feature type="chain" id="PRO_0000257772" description="Cobalt-precorrin-5B C(1)-methyltransferase">
    <location>
        <begin position="1"/>
        <end position="365"/>
    </location>
</feature>
<gene>
    <name evidence="1" type="primary">cbiD</name>
    <name type="ordered locus">PFL_0655</name>
</gene>
<sequence>MREETAEQPAPLRSGLTTGSCATATSLAAARLLLEGSNADAVQIILPKGKQVQMRLEFCRHTADGAEAGTIKDAGDDPDVTHGALLYSRVRLTPEPGIRFIAGQGVGTVTRPGLVLAVGEPAINPIPRRMIGEHLQRLAEERAYPGGFEVTVNVEGGAELALKTMNPRLGILGGLSILGTSGIVRPFSCAAYIASIHQGIDVAKTNGYLHIAACTGNASEDTMRRVYELPEIALIEMGDFVGAVLKHLRKVPVDKLSLCGGFGKISKLAAGHMDLHSRHSSIDLSQLAQWAADAGADPALQQAIRQANTSQQALAMASAAGVALGDAVCRHALDFARSVVPPQVQVEVFAIDRQGGIVGHAGGFQ</sequence>